<gene>
    <name evidence="1" type="primary">rpsQ</name>
    <name type="ordered locus">aq_020</name>
</gene>
<accession>O66439</accession>
<proteinExistence type="inferred from homology"/>
<protein>
    <recommendedName>
        <fullName evidence="1">Small ribosomal subunit protein uS17</fullName>
    </recommendedName>
    <alternativeName>
        <fullName evidence="2">30S ribosomal protein S17</fullName>
    </alternativeName>
</protein>
<feature type="chain" id="PRO_0000128444" description="Small ribosomal subunit protein uS17">
    <location>
        <begin position="1"/>
        <end position="107"/>
    </location>
</feature>
<sequence length="107" mass="12836">MTEQKQQKKWHEKRKHLVGVVVSDKMDKTVVVKVDRKVPHPIYGKHIIKSKKYHAHDEHNECRVGDIVMIRETRPLSKTKRWVVVKILQRARRPEEEIQKQQEGQEQ</sequence>
<dbReference type="EMBL" id="AE000657">
    <property type="protein sequence ID" value="AAC06400.1"/>
    <property type="molecule type" value="Genomic_DNA"/>
</dbReference>
<dbReference type="PIR" id="D70301">
    <property type="entry name" value="D70301"/>
</dbReference>
<dbReference type="RefSeq" id="NP_212998.1">
    <property type="nucleotide sequence ID" value="NC_000918.1"/>
</dbReference>
<dbReference type="RefSeq" id="WP_010879936.1">
    <property type="nucleotide sequence ID" value="NC_000918.1"/>
</dbReference>
<dbReference type="SMR" id="O66439"/>
<dbReference type="FunCoup" id="O66439">
    <property type="interactions" value="377"/>
</dbReference>
<dbReference type="STRING" id="224324.aq_020"/>
<dbReference type="EnsemblBacteria" id="AAC06400">
    <property type="protein sequence ID" value="AAC06400"/>
    <property type="gene ID" value="aq_020"/>
</dbReference>
<dbReference type="KEGG" id="aae:aq_020"/>
<dbReference type="PATRIC" id="fig|224324.8.peg.13"/>
<dbReference type="eggNOG" id="COG0186">
    <property type="taxonomic scope" value="Bacteria"/>
</dbReference>
<dbReference type="HOGENOM" id="CLU_073626_1_2_0"/>
<dbReference type="InParanoid" id="O66439"/>
<dbReference type="OrthoDB" id="9811714at2"/>
<dbReference type="Proteomes" id="UP000000798">
    <property type="component" value="Chromosome"/>
</dbReference>
<dbReference type="GO" id="GO:0022627">
    <property type="term" value="C:cytosolic small ribosomal subunit"/>
    <property type="evidence" value="ECO:0000318"/>
    <property type="project" value="GO_Central"/>
</dbReference>
<dbReference type="GO" id="GO:0019843">
    <property type="term" value="F:rRNA binding"/>
    <property type="evidence" value="ECO:0007669"/>
    <property type="project" value="UniProtKB-UniRule"/>
</dbReference>
<dbReference type="GO" id="GO:0003735">
    <property type="term" value="F:structural constituent of ribosome"/>
    <property type="evidence" value="ECO:0000318"/>
    <property type="project" value="GO_Central"/>
</dbReference>
<dbReference type="GO" id="GO:0006412">
    <property type="term" value="P:translation"/>
    <property type="evidence" value="ECO:0007669"/>
    <property type="project" value="UniProtKB-UniRule"/>
</dbReference>
<dbReference type="CDD" id="cd00364">
    <property type="entry name" value="Ribosomal_uS17"/>
    <property type="match status" value="1"/>
</dbReference>
<dbReference type="FunFam" id="2.40.50.140:FF:000204">
    <property type="entry name" value="30S ribosomal protein S17"/>
    <property type="match status" value="1"/>
</dbReference>
<dbReference type="Gene3D" id="2.40.50.140">
    <property type="entry name" value="Nucleic acid-binding proteins"/>
    <property type="match status" value="1"/>
</dbReference>
<dbReference type="HAMAP" id="MF_01345_B">
    <property type="entry name" value="Ribosomal_uS17_B"/>
    <property type="match status" value="1"/>
</dbReference>
<dbReference type="InterPro" id="IPR012340">
    <property type="entry name" value="NA-bd_OB-fold"/>
</dbReference>
<dbReference type="InterPro" id="IPR000266">
    <property type="entry name" value="Ribosomal_uS17"/>
</dbReference>
<dbReference type="InterPro" id="IPR019984">
    <property type="entry name" value="Ribosomal_uS17_bact/chlr"/>
</dbReference>
<dbReference type="InterPro" id="IPR019979">
    <property type="entry name" value="Ribosomal_uS17_CS"/>
</dbReference>
<dbReference type="NCBIfam" id="NF004123">
    <property type="entry name" value="PRK05610.1"/>
    <property type="match status" value="1"/>
</dbReference>
<dbReference type="NCBIfam" id="TIGR03635">
    <property type="entry name" value="uS17_bact"/>
    <property type="match status" value="1"/>
</dbReference>
<dbReference type="PANTHER" id="PTHR10744">
    <property type="entry name" value="40S RIBOSOMAL PROTEIN S11 FAMILY MEMBER"/>
    <property type="match status" value="1"/>
</dbReference>
<dbReference type="PANTHER" id="PTHR10744:SF1">
    <property type="entry name" value="SMALL RIBOSOMAL SUBUNIT PROTEIN US17M"/>
    <property type="match status" value="1"/>
</dbReference>
<dbReference type="Pfam" id="PF00366">
    <property type="entry name" value="Ribosomal_S17"/>
    <property type="match status" value="1"/>
</dbReference>
<dbReference type="PRINTS" id="PR00973">
    <property type="entry name" value="RIBOSOMALS17"/>
</dbReference>
<dbReference type="SUPFAM" id="SSF50249">
    <property type="entry name" value="Nucleic acid-binding proteins"/>
    <property type="match status" value="1"/>
</dbReference>
<dbReference type="PROSITE" id="PS00056">
    <property type="entry name" value="RIBOSOMAL_S17"/>
    <property type="match status" value="1"/>
</dbReference>
<name>RS17_AQUAE</name>
<organism>
    <name type="scientific">Aquifex aeolicus (strain VF5)</name>
    <dbReference type="NCBI Taxonomy" id="224324"/>
    <lineage>
        <taxon>Bacteria</taxon>
        <taxon>Pseudomonadati</taxon>
        <taxon>Aquificota</taxon>
        <taxon>Aquificia</taxon>
        <taxon>Aquificales</taxon>
        <taxon>Aquificaceae</taxon>
        <taxon>Aquifex</taxon>
    </lineage>
</organism>
<evidence type="ECO:0000255" key="1">
    <source>
        <dbReference type="HAMAP-Rule" id="MF_01345"/>
    </source>
</evidence>
<evidence type="ECO:0000305" key="2"/>
<keyword id="KW-1185">Reference proteome</keyword>
<keyword id="KW-0687">Ribonucleoprotein</keyword>
<keyword id="KW-0689">Ribosomal protein</keyword>
<keyword id="KW-0694">RNA-binding</keyword>
<keyword id="KW-0699">rRNA-binding</keyword>
<comment type="function">
    <text evidence="1">One of the primary rRNA binding proteins, it binds specifically to the 5'-end of 16S ribosomal RNA.</text>
</comment>
<comment type="subunit">
    <text evidence="1">Part of the 30S ribosomal subunit.</text>
</comment>
<comment type="similarity">
    <text evidence="1">Belongs to the universal ribosomal protein uS17 family.</text>
</comment>
<reference key="1">
    <citation type="journal article" date="1998" name="Nature">
        <title>The complete genome of the hyperthermophilic bacterium Aquifex aeolicus.</title>
        <authorList>
            <person name="Deckert G."/>
            <person name="Warren P.V."/>
            <person name="Gaasterland T."/>
            <person name="Young W.G."/>
            <person name="Lenox A.L."/>
            <person name="Graham D.E."/>
            <person name="Overbeek R."/>
            <person name="Snead M.A."/>
            <person name="Keller M."/>
            <person name="Aujay M."/>
            <person name="Huber R."/>
            <person name="Feldman R.A."/>
            <person name="Short J.M."/>
            <person name="Olsen G.J."/>
            <person name="Swanson R.V."/>
        </authorList>
    </citation>
    <scope>NUCLEOTIDE SEQUENCE [LARGE SCALE GENOMIC DNA]</scope>
    <source>
        <strain>VF5</strain>
    </source>
</reference>